<reference key="1">
    <citation type="journal article" date="2015" name="Microbiology">
        <title>Genome of Methanoregula boonei 6A8 reveals adaptations to oligotrophic peatland environments.</title>
        <authorList>
            <person name="Braeuer S."/>
            <person name="Cadillo-Quiroz H."/>
            <person name="Kyrpides N."/>
            <person name="Woyke T."/>
            <person name="Goodwin L."/>
            <person name="Detter C."/>
            <person name="Podell S."/>
            <person name="Yavitt J.B."/>
            <person name="Zinder S.H."/>
        </authorList>
    </citation>
    <scope>NUCLEOTIDE SEQUENCE [LARGE SCALE GENOMIC DNA]</scope>
    <source>
        <strain>DSM 21154 / JCM 14090 / 6A8</strain>
    </source>
</reference>
<protein>
    <recommendedName>
        <fullName evidence="1">DNA-binding protein Mboo_1886</fullName>
    </recommendedName>
</protein>
<sequence>MGDDELSEIRKRRMAQLQQQAGDQQAMQEEVERQQRLKSQIQMVLMQVLEPDARERLNTIRLTKPDFASAVEQQLVMLAQSGRLRQKITDAQLKDLLRQLAPAKRDYSITRK</sequence>
<evidence type="ECO:0000255" key="1">
    <source>
        <dbReference type="HAMAP-Rule" id="MF_00026"/>
    </source>
</evidence>
<dbReference type="EMBL" id="CP000780">
    <property type="protein sequence ID" value="ABS56401.1"/>
    <property type="molecule type" value="Genomic_DNA"/>
</dbReference>
<dbReference type="RefSeq" id="WP_012107454.1">
    <property type="nucleotide sequence ID" value="NC_009712.1"/>
</dbReference>
<dbReference type="SMR" id="A7I9J0"/>
<dbReference type="STRING" id="456442.Mboo_1886"/>
<dbReference type="GeneID" id="5411380"/>
<dbReference type="KEGG" id="mbn:Mboo_1886"/>
<dbReference type="eggNOG" id="arCOG04179">
    <property type="taxonomic scope" value="Archaea"/>
</dbReference>
<dbReference type="HOGENOM" id="CLU_122978_3_0_2"/>
<dbReference type="OrthoDB" id="7912at2157"/>
<dbReference type="Proteomes" id="UP000002408">
    <property type="component" value="Chromosome"/>
</dbReference>
<dbReference type="GO" id="GO:0005829">
    <property type="term" value="C:cytosol"/>
    <property type="evidence" value="ECO:0007669"/>
    <property type="project" value="TreeGrafter"/>
</dbReference>
<dbReference type="GO" id="GO:0003677">
    <property type="term" value="F:DNA binding"/>
    <property type="evidence" value="ECO:0007669"/>
    <property type="project" value="UniProtKB-UniRule"/>
</dbReference>
<dbReference type="Gene3D" id="1.10.8.140">
    <property type="entry name" value="PDCD5-like"/>
    <property type="match status" value="1"/>
</dbReference>
<dbReference type="HAMAP" id="MF_00026">
    <property type="entry name" value="dsDNA_bind"/>
    <property type="match status" value="1"/>
</dbReference>
<dbReference type="InterPro" id="IPR022889">
    <property type="entry name" value="DNA_bind_arc"/>
</dbReference>
<dbReference type="InterPro" id="IPR002836">
    <property type="entry name" value="PDCD5-like"/>
</dbReference>
<dbReference type="InterPro" id="IPR036883">
    <property type="entry name" value="PDCD5-like_sf"/>
</dbReference>
<dbReference type="NCBIfam" id="NF003268">
    <property type="entry name" value="PRK04239.1"/>
    <property type="match status" value="1"/>
</dbReference>
<dbReference type="PANTHER" id="PTHR10840">
    <property type="entry name" value="PROGRAMMED CELL DEATH PROTEIN 5"/>
    <property type="match status" value="1"/>
</dbReference>
<dbReference type="PANTHER" id="PTHR10840:SF0">
    <property type="entry name" value="PROGRAMMED CELL DEATH PROTEIN 5"/>
    <property type="match status" value="1"/>
</dbReference>
<dbReference type="Pfam" id="PF01984">
    <property type="entry name" value="dsDNA_bind"/>
    <property type="match status" value="1"/>
</dbReference>
<dbReference type="PIRSF" id="PIRSF015730">
    <property type="entry name" value="TFAR19"/>
    <property type="match status" value="1"/>
</dbReference>
<dbReference type="SUPFAM" id="SSF46950">
    <property type="entry name" value="Double-stranded DNA-binding domain"/>
    <property type="match status" value="1"/>
</dbReference>
<comment type="similarity">
    <text evidence="1">Belongs to the PDCD5 family.</text>
</comment>
<gene>
    <name type="ordered locus">Mboo_1886</name>
</gene>
<feature type="chain" id="PRO_1000002196" description="DNA-binding protein Mboo_1886">
    <location>
        <begin position="1"/>
        <end position="112"/>
    </location>
</feature>
<accession>A7I9J0</accession>
<organism>
    <name type="scientific">Methanoregula boonei (strain DSM 21154 / JCM 14090 / 6A8)</name>
    <dbReference type="NCBI Taxonomy" id="456442"/>
    <lineage>
        <taxon>Archaea</taxon>
        <taxon>Methanobacteriati</taxon>
        <taxon>Methanobacteriota</taxon>
        <taxon>Stenosarchaea group</taxon>
        <taxon>Methanomicrobia</taxon>
        <taxon>Methanomicrobiales</taxon>
        <taxon>Methanoregulaceae</taxon>
        <taxon>Methanoregula</taxon>
    </lineage>
</organism>
<keyword id="KW-0238">DNA-binding</keyword>
<keyword id="KW-1185">Reference proteome</keyword>
<name>Y1886_METB6</name>
<proteinExistence type="inferred from homology"/>